<protein>
    <recommendedName>
        <fullName evidence="1">Deoxyribose-phosphate aldolase</fullName>
        <shortName evidence="1">DERA</shortName>
        <ecNumber evidence="1">4.1.2.4</ecNumber>
    </recommendedName>
    <alternativeName>
        <fullName evidence="1">2-deoxy-D-ribose 5-phosphate aldolase</fullName>
    </alternativeName>
    <alternativeName>
        <fullName evidence="1">Phosphodeoxyriboaldolase</fullName>
        <shortName evidence="1">Deoxyriboaldolase</shortName>
    </alternativeName>
</protein>
<comment type="function">
    <text evidence="1">Catalyzes a reversible aldol reaction between acetaldehyde and D-glyceraldehyde 3-phosphate to generate 2-deoxy-D-ribose 5-phosphate.</text>
</comment>
<comment type="catalytic activity">
    <reaction evidence="1">
        <text>2-deoxy-D-ribose 5-phosphate = D-glyceraldehyde 3-phosphate + acetaldehyde</text>
        <dbReference type="Rhea" id="RHEA:12821"/>
        <dbReference type="ChEBI" id="CHEBI:15343"/>
        <dbReference type="ChEBI" id="CHEBI:59776"/>
        <dbReference type="ChEBI" id="CHEBI:62877"/>
        <dbReference type="EC" id="4.1.2.4"/>
    </reaction>
</comment>
<comment type="pathway">
    <text evidence="1">Carbohydrate degradation; 2-deoxy-D-ribose 1-phosphate degradation; D-glyceraldehyde 3-phosphate and acetaldehyde from 2-deoxy-alpha-D-ribose 1-phosphate: step 2/2.</text>
</comment>
<comment type="subcellular location">
    <subcellularLocation>
        <location evidence="1">Cytoplasm</location>
    </subcellularLocation>
</comment>
<comment type="similarity">
    <text evidence="1 2">Belongs to the DeoC/FbaB aldolase family. DeoC type 1 subfamily.</text>
</comment>
<organism>
    <name type="scientific">Ureaplasma parvum serovar 3 (strain ATCC 700970)</name>
    <dbReference type="NCBI Taxonomy" id="273119"/>
    <lineage>
        <taxon>Bacteria</taxon>
        <taxon>Bacillati</taxon>
        <taxon>Mycoplasmatota</taxon>
        <taxon>Mycoplasmoidales</taxon>
        <taxon>Mycoplasmoidaceae</taxon>
        <taxon>Ureaplasma</taxon>
    </lineage>
</organism>
<proteinExistence type="inferred from homology"/>
<feature type="chain" id="PRO_0000057283" description="Deoxyribose-phosphate aldolase">
    <location>
        <begin position="1"/>
        <end position="215"/>
    </location>
</feature>
<feature type="active site" description="Proton donor/acceptor" evidence="1">
    <location>
        <position position="90"/>
    </location>
</feature>
<feature type="active site" description="Schiff-base intermediate with acetaldehyde" evidence="1">
    <location>
        <position position="152"/>
    </location>
</feature>
<feature type="active site" description="Proton donor/acceptor" evidence="1">
    <location>
        <position position="181"/>
    </location>
</feature>
<gene>
    <name evidence="1" type="primary">deoC</name>
    <name type="ordered locus">UU585</name>
</gene>
<reference key="1">
    <citation type="journal article" date="2000" name="Nature">
        <title>The complete sequence of the mucosal pathogen Ureaplasma urealyticum.</title>
        <authorList>
            <person name="Glass J.I."/>
            <person name="Lefkowitz E.J."/>
            <person name="Glass J.S."/>
            <person name="Heiner C.R."/>
            <person name="Chen E.Y."/>
            <person name="Cassell G.H."/>
        </authorList>
    </citation>
    <scope>NUCLEOTIDE SEQUENCE [LARGE SCALE GENOMIC DNA]</scope>
    <source>
        <strain>ATCC 700970</strain>
    </source>
</reference>
<dbReference type="EC" id="4.1.2.4" evidence="1"/>
<dbReference type="EMBL" id="AF222894">
    <property type="protein sequence ID" value="AAF30999.1"/>
    <property type="molecule type" value="Genomic_DNA"/>
</dbReference>
<dbReference type="RefSeq" id="WP_006688583.1">
    <property type="nucleotide sequence ID" value="NC_002162.1"/>
</dbReference>
<dbReference type="SMR" id="Q9PPQ4"/>
<dbReference type="STRING" id="273119.UU585"/>
<dbReference type="EnsemblBacteria" id="AAF30999">
    <property type="protein sequence ID" value="AAF30999"/>
    <property type="gene ID" value="UU585"/>
</dbReference>
<dbReference type="GeneID" id="29672297"/>
<dbReference type="KEGG" id="uur:UU585"/>
<dbReference type="eggNOG" id="COG0274">
    <property type="taxonomic scope" value="Bacteria"/>
</dbReference>
<dbReference type="HOGENOM" id="CLU_053595_0_2_14"/>
<dbReference type="OrthoDB" id="9778711at2"/>
<dbReference type="UniPathway" id="UPA00002">
    <property type="reaction ID" value="UER00468"/>
</dbReference>
<dbReference type="Proteomes" id="UP000000423">
    <property type="component" value="Chromosome"/>
</dbReference>
<dbReference type="GO" id="GO:0005737">
    <property type="term" value="C:cytoplasm"/>
    <property type="evidence" value="ECO:0007669"/>
    <property type="project" value="UniProtKB-SubCell"/>
</dbReference>
<dbReference type="GO" id="GO:0004139">
    <property type="term" value="F:deoxyribose-phosphate aldolase activity"/>
    <property type="evidence" value="ECO:0007669"/>
    <property type="project" value="UniProtKB-UniRule"/>
</dbReference>
<dbReference type="GO" id="GO:0006018">
    <property type="term" value="P:2-deoxyribose 1-phosphate catabolic process"/>
    <property type="evidence" value="ECO:0007669"/>
    <property type="project" value="UniProtKB-UniRule"/>
</dbReference>
<dbReference type="GO" id="GO:0016052">
    <property type="term" value="P:carbohydrate catabolic process"/>
    <property type="evidence" value="ECO:0007669"/>
    <property type="project" value="TreeGrafter"/>
</dbReference>
<dbReference type="GO" id="GO:0009264">
    <property type="term" value="P:deoxyribonucleotide catabolic process"/>
    <property type="evidence" value="ECO:0007669"/>
    <property type="project" value="InterPro"/>
</dbReference>
<dbReference type="CDD" id="cd00959">
    <property type="entry name" value="DeoC"/>
    <property type="match status" value="1"/>
</dbReference>
<dbReference type="FunFam" id="3.20.20.70:FF:000044">
    <property type="entry name" value="Deoxyribose-phosphate aldolase"/>
    <property type="match status" value="1"/>
</dbReference>
<dbReference type="Gene3D" id="3.20.20.70">
    <property type="entry name" value="Aldolase class I"/>
    <property type="match status" value="1"/>
</dbReference>
<dbReference type="HAMAP" id="MF_00114">
    <property type="entry name" value="DeoC_type1"/>
    <property type="match status" value="1"/>
</dbReference>
<dbReference type="InterPro" id="IPR013785">
    <property type="entry name" value="Aldolase_TIM"/>
</dbReference>
<dbReference type="InterPro" id="IPR011343">
    <property type="entry name" value="DeoC"/>
</dbReference>
<dbReference type="InterPro" id="IPR002915">
    <property type="entry name" value="DeoC/FbaB/LacD_aldolase"/>
</dbReference>
<dbReference type="InterPro" id="IPR028581">
    <property type="entry name" value="DeoC_typeI"/>
</dbReference>
<dbReference type="NCBIfam" id="TIGR00126">
    <property type="entry name" value="deoC"/>
    <property type="match status" value="1"/>
</dbReference>
<dbReference type="PANTHER" id="PTHR10889">
    <property type="entry name" value="DEOXYRIBOSE-PHOSPHATE ALDOLASE"/>
    <property type="match status" value="1"/>
</dbReference>
<dbReference type="PANTHER" id="PTHR10889:SF1">
    <property type="entry name" value="DEOXYRIBOSE-PHOSPHATE ALDOLASE"/>
    <property type="match status" value="1"/>
</dbReference>
<dbReference type="Pfam" id="PF01791">
    <property type="entry name" value="DeoC"/>
    <property type="match status" value="1"/>
</dbReference>
<dbReference type="PIRSF" id="PIRSF001357">
    <property type="entry name" value="DeoC"/>
    <property type="match status" value="1"/>
</dbReference>
<dbReference type="SMART" id="SM01133">
    <property type="entry name" value="DeoC"/>
    <property type="match status" value="1"/>
</dbReference>
<dbReference type="SUPFAM" id="SSF51569">
    <property type="entry name" value="Aldolase"/>
    <property type="match status" value="1"/>
</dbReference>
<keyword id="KW-0963">Cytoplasm</keyword>
<keyword id="KW-0456">Lyase</keyword>
<keyword id="KW-1185">Reference proteome</keyword>
<keyword id="KW-0704">Schiff base</keyword>
<evidence type="ECO:0000255" key="1">
    <source>
        <dbReference type="HAMAP-Rule" id="MF_00114"/>
    </source>
</evidence>
<evidence type="ECO:0000305" key="2"/>
<accession>Q9PPQ4</accession>
<sequence length="215" mass="24109">MNKYNIYVDHTLLKADASLEEIHKLCEEAEENEFYSVCINPCFVKVAKHYLLETSVKICTVIGFPLGANTIETKVFETKNAIDLGADEIDMVININQLINGNREYCLNEINQIKEVCGDKILKVIVETAFLNREQKEFAAKIILESNADFIKTSTGFAKEGAKLEDIILWKRILGDVKQIKASGGIKNFEDFKSFIEAGATRIGTSSAIKILNNH</sequence>
<name>DEOC_UREPA</name>